<accession>Q556Y9</accession>
<accession>Q86JT2</accession>
<proteinExistence type="inferred from homology"/>
<evidence type="ECO:0000250" key="1"/>
<evidence type="ECO:0000255" key="2">
    <source>
        <dbReference type="PROSITE-ProRule" id="PRU00109"/>
    </source>
</evidence>
<evidence type="ECO:0000305" key="3"/>
<feature type="chain" id="PRO_0000328297" description="Mitotic spindle assembly checkpoint protein MAD2A">
    <location>
        <begin position="1"/>
        <end position="203"/>
    </location>
</feature>
<feature type="domain" description="HORMA" evidence="2">
    <location>
        <begin position="14"/>
        <end position="196"/>
    </location>
</feature>
<feature type="region of interest" description="Required for assuming the closed conformation and for interaction with cdc20" evidence="1">
    <location>
        <begin position="194"/>
        <end position="203"/>
    </location>
</feature>
<keyword id="KW-0131">Cell cycle</keyword>
<keyword id="KW-0132">Cell division</keyword>
<keyword id="KW-0137">Centromere</keyword>
<keyword id="KW-0158">Chromosome</keyword>
<keyword id="KW-0963">Cytoplasm</keyword>
<keyword id="KW-0995">Kinetochore</keyword>
<keyword id="KW-0498">Mitosis</keyword>
<keyword id="KW-0539">Nucleus</keyword>
<keyword id="KW-1185">Reference proteome</keyword>
<comment type="function">
    <text evidence="1">Component of the spindle-assembly checkpoint that prevents the onset of anaphase until all chromosomes are properly aligned at the metaphase plate. Required for the execution of the mitotic checkpoint which monitors the process of kinetochore-spindle attachment and inhibits the activity of the anaphase promoting complex until all chromosomes are aligned at the metaphase plate (By similarity).</text>
</comment>
<comment type="subunit">
    <text evidence="1">Interacts with cdc20.</text>
</comment>
<comment type="subcellular location">
    <subcellularLocation>
        <location evidence="1">Nucleus</location>
    </subcellularLocation>
    <subcellularLocation>
        <location evidence="1">Chromosome</location>
        <location evidence="1">Centromere</location>
        <location evidence="1">Kinetochore</location>
    </subcellularLocation>
    <subcellularLocation>
        <location evidence="1">Cytoplasm</location>
    </subcellularLocation>
</comment>
<comment type="domain">
    <text evidence="1">The protein has two highly different native conformations, an inactive open conformation that cannot bind cdc20 and that predominates in cytosolic monomers, and an active closed conformation.</text>
</comment>
<comment type="similarity">
    <text evidence="3">Belongs to the MAD2 family.</text>
</comment>
<comment type="caution">
    <text evidence="3">The gene for this protein is duplicated in strains AX3 and AX4. These strains contain a duplication of a segment of 750 kb of chromosome 2 compared to the corresponding sequence in strain AX2.</text>
</comment>
<dbReference type="EMBL" id="AAFI02000011">
    <property type="protein sequence ID" value="EAL70554.1"/>
    <property type="molecule type" value="Genomic_DNA"/>
</dbReference>
<dbReference type="EMBL" id="AAFI02000009">
    <property type="protein sequence ID" value="EAL70818.1"/>
    <property type="molecule type" value="Genomic_DNA"/>
</dbReference>
<dbReference type="RefSeq" id="XP_644480.1">
    <property type="nucleotide sequence ID" value="XM_639388.1"/>
</dbReference>
<dbReference type="RefSeq" id="XP_644770.1">
    <property type="nucleotide sequence ID" value="XM_639678.1"/>
</dbReference>
<dbReference type="SMR" id="Q556Y9"/>
<dbReference type="FunCoup" id="Q556Y9">
    <property type="interactions" value="633"/>
</dbReference>
<dbReference type="STRING" id="44689.Q556Y9"/>
<dbReference type="PaxDb" id="44689-DDB0232272"/>
<dbReference type="EnsemblProtists" id="EAL70554">
    <property type="protein sequence ID" value="EAL70554"/>
    <property type="gene ID" value="DDB_G0273727"/>
</dbReference>
<dbReference type="EnsemblProtists" id="EAL70818">
    <property type="protein sequence ID" value="EAL70818"/>
    <property type="gene ID" value="DDB_G0273201"/>
</dbReference>
<dbReference type="GeneID" id="8618872"/>
<dbReference type="GeneID" id="8619104"/>
<dbReference type="KEGG" id="ddi:DDB_G0273201"/>
<dbReference type="KEGG" id="ddi:DDB_G0273727"/>
<dbReference type="dictyBase" id="DDB_G0273201"/>
<dbReference type="dictyBase" id="DDB_G0273727"/>
<dbReference type="VEuPathDB" id="AmoebaDB:DDB_G0273201"/>
<dbReference type="eggNOG" id="KOG3285">
    <property type="taxonomic scope" value="Eukaryota"/>
</dbReference>
<dbReference type="HOGENOM" id="CLU_072097_0_0_1"/>
<dbReference type="InParanoid" id="Q556Y9"/>
<dbReference type="OMA" id="WQFDVEI"/>
<dbReference type="PhylomeDB" id="Q556Y9"/>
<dbReference type="Reactome" id="R-DDI-141405">
    <property type="pathway name" value="Inhibition of the proteolytic activity of APC/C required for the onset of anaphase by mitotic spindle checkpoint components"/>
</dbReference>
<dbReference type="Reactome" id="R-DDI-141430">
    <property type="pathway name" value="Inactivation of APC/C via direct inhibition of the APC/C complex"/>
</dbReference>
<dbReference type="Reactome" id="R-DDI-174184">
    <property type="pathway name" value="Cdc20:Phospho-APC/C mediated degradation of Cyclin A"/>
</dbReference>
<dbReference type="Reactome" id="R-DDI-176409">
    <property type="pathway name" value="APC/C:Cdc20 mediated degradation of mitotic proteins"/>
</dbReference>
<dbReference type="Reactome" id="R-DDI-179409">
    <property type="pathway name" value="APC-Cdc20 mediated degradation of Nek2A"/>
</dbReference>
<dbReference type="PRO" id="PR:Q556Y9"/>
<dbReference type="Proteomes" id="UP000002195">
    <property type="component" value="Chromosome 2"/>
</dbReference>
<dbReference type="GO" id="GO:0005737">
    <property type="term" value="C:cytoplasm"/>
    <property type="evidence" value="ECO:0000318"/>
    <property type="project" value="GO_Central"/>
</dbReference>
<dbReference type="GO" id="GO:0000776">
    <property type="term" value="C:kinetochore"/>
    <property type="evidence" value="ECO:0000250"/>
    <property type="project" value="dictyBase"/>
</dbReference>
<dbReference type="GO" id="GO:0005654">
    <property type="term" value="C:nucleoplasm"/>
    <property type="evidence" value="ECO:0000318"/>
    <property type="project" value="GO_Central"/>
</dbReference>
<dbReference type="GO" id="GO:0051301">
    <property type="term" value="P:cell division"/>
    <property type="evidence" value="ECO:0007669"/>
    <property type="project" value="UniProtKB-KW"/>
</dbReference>
<dbReference type="GO" id="GO:0099139">
    <property type="term" value="P:cheating during chimeric sorocarp development"/>
    <property type="evidence" value="ECO:0000315"/>
    <property type="project" value="dictyBase"/>
</dbReference>
<dbReference type="GO" id="GO:0007094">
    <property type="term" value="P:mitotic spindle assembly checkpoint signaling"/>
    <property type="evidence" value="ECO:0000250"/>
    <property type="project" value="dictyBase"/>
</dbReference>
<dbReference type="FunFam" id="3.30.900.10:FF:000002">
    <property type="entry name" value="Mitotic spindle assembly checkpoint protein MAD2A"/>
    <property type="match status" value="1"/>
</dbReference>
<dbReference type="Gene3D" id="3.30.900.10">
    <property type="entry name" value="HORMA domain"/>
    <property type="match status" value="1"/>
</dbReference>
<dbReference type="InterPro" id="IPR003511">
    <property type="entry name" value="HORMA_dom"/>
</dbReference>
<dbReference type="InterPro" id="IPR036570">
    <property type="entry name" value="HORMA_dom_sf"/>
</dbReference>
<dbReference type="InterPro" id="IPR045091">
    <property type="entry name" value="Mad2-like"/>
</dbReference>
<dbReference type="PANTHER" id="PTHR11842">
    <property type="entry name" value="MITOTIC SPINDLE ASSEMBLY CHECKPOINT PROTEIN MAD2"/>
    <property type="match status" value="1"/>
</dbReference>
<dbReference type="PANTHER" id="PTHR11842:SF11">
    <property type="entry name" value="MITOTIC SPINDLE ASSEMBLY CHECKPOINT PROTEIN MAD2A"/>
    <property type="match status" value="1"/>
</dbReference>
<dbReference type="Pfam" id="PF02301">
    <property type="entry name" value="HORMA"/>
    <property type="match status" value="1"/>
</dbReference>
<dbReference type="SUPFAM" id="SSF56019">
    <property type="entry name" value="The spindle assembly checkpoint protein mad2"/>
    <property type="match status" value="1"/>
</dbReference>
<dbReference type="PROSITE" id="PS50815">
    <property type="entry name" value="HORMA"/>
    <property type="match status" value="1"/>
</dbReference>
<protein>
    <recommendedName>
        <fullName>Mitotic spindle assembly checkpoint protein MAD2A</fullName>
    </recommendedName>
    <alternativeName>
        <fullName>Mitotic arrest deficient 2-like protein 1</fullName>
        <shortName>MAD2-like protein 1</shortName>
    </alternativeName>
</protein>
<gene>
    <name type="primary">mad2l1-1</name>
    <name type="synonym">mad2a-1</name>
    <name type="ORF">DDB_G0273201</name>
</gene>
<gene>
    <name type="primary">mad2l1-2</name>
    <name type="synonym">mad2a-2</name>
    <name type="ORF">DDB_G0273727</name>
</gene>
<name>MD2L1_DICDI</name>
<sequence>MQAAVASKTNISLKGSTEIVTEFFSYSINTILFQRGLYPPESFTRVAKYGLPILVTNDQSLKDYLDNVLKQLSEWLLSGDVQKLVLVITDIVTKEVLERWVFDVTTDIPKEGEAPRQKPEKEIMNEIQAIIRQITASVTFLPLLPNACTFDLLVYTSKDLAVPQKWEESDPKFITNSQQVKLRSFTTTIHKVESMVAYKISND</sequence>
<organism>
    <name type="scientific">Dictyostelium discoideum</name>
    <name type="common">Social amoeba</name>
    <dbReference type="NCBI Taxonomy" id="44689"/>
    <lineage>
        <taxon>Eukaryota</taxon>
        <taxon>Amoebozoa</taxon>
        <taxon>Evosea</taxon>
        <taxon>Eumycetozoa</taxon>
        <taxon>Dictyostelia</taxon>
        <taxon>Dictyosteliales</taxon>
        <taxon>Dictyosteliaceae</taxon>
        <taxon>Dictyostelium</taxon>
    </lineage>
</organism>
<reference key="1">
    <citation type="journal article" date="2002" name="Nature">
        <title>Sequence and analysis of chromosome 2 of Dictyostelium discoideum.</title>
        <authorList>
            <person name="Gloeckner G."/>
            <person name="Eichinger L."/>
            <person name="Szafranski K."/>
            <person name="Pachebat J.A."/>
            <person name="Bankier A.T."/>
            <person name="Dear P.H."/>
            <person name="Lehmann R."/>
            <person name="Baumgart C."/>
            <person name="Parra G."/>
            <person name="Abril J.F."/>
            <person name="Guigo R."/>
            <person name="Kumpf K."/>
            <person name="Tunggal B."/>
            <person name="Cox E.C."/>
            <person name="Quail M.A."/>
            <person name="Platzer M."/>
            <person name="Rosenthal A."/>
            <person name="Noegel A.A."/>
        </authorList>
    </citation>
    <scope>NUCLEOTIDE SEQUENCE [LARGE SCALE GENOMIC DNA]</scope>
    <source>
        <strain>AX4</strain>
    </source>
</reference>
<reference key="2">
    <citation type="journal article" date="2005" name="Nature">
        <title>The genome of the social amoeba Dictyostelium discoideum.</title>
        <authorList>
            <person name="Eichinger L."/>
            <person name="Pachebat J.A."/>
            <person name="Gloeckner G."/>
            <person name="Rajandream M.A."/>
            <person name="Sucgang R."/>
            <person name="Berriman M."/>
            <person name="Song J."/>
            <person name="Olsen R."/>
            <person name="Szafranski K."/>
            <person name="Xu Q."/>
            <person name="Tunggal B."/>
            <person name="Kummerfeld S."/>
            <person name="Madera M."/>
            <person name="Konfortov B.A."/>
            <person name="Rivero F."/>
            <person name="Bankier A.T."/>
            <person name="Lehmann R."/>
            <person name="Hamlin N."/>
            <person name="Davies R."/>
            <person name="Gaudet P."/>
            <person name="Fey P."/>
            <person name="Pilcher K."/>
            <person name="Chen G."/>
            <person name="Saunders D."/>
            <person name="Sodergren E.J."/>
            <person name="Davis P."/>
            <person name="Kerhornou A."/>
            <person name="Nie X."/>
            <person name="Hall N."/>
            <person name="Anjard C."/>
            <person name="Hemphill L."/>
            <person name="Bason N."/>
            <person name="Farbrother P."/>
            <person name="Desany B."/>
            <person name="Just E."/>
            <person name="Morio T."/>
            <person name="Rost R."/>
            <person name="Churcher C.M."/>
            <person name="Cooper J."/>
            <person name="Haydock S."/>
            <person name="van Driessche N."/>
            <person name="Cronin A."/>
            <person name="Goodhead I."/>
            <person name="Muzny D.M."/>
            <person name="Mourier T."/>
            <person name="Pain A."/>
            <person name="Lu M."/>
            <person name="Harper D."/>
            <person name="Lindsay R."/>
            <person name="Hauser H."/>
            <person name="James K.D."/>
            <person name="Quiles M."/>
            <person name="Madan Babu M."/>
            <person name="Saito T."/>
            <person name="Buchrieser C."/>
            <person name="Wardroper A."/>
            <person name="Felder M."/>
            <person name="Thangavelu M."/>
            <person name="Johnson D."/>
            <person name="Knights A."/>
            <person name="Loulseged H."/>
            <person name="Mungall K.L."/>
            <person name="Oliver K."/>
            <person name="Price C."/>
            <person name="Quail M.A."/>
            <person name="Urushihara H."/>
            <person name="Hernandez J."/>
            <person name="Rabbinowitsch E."/>
            <person name="Steffen D."/>
            <person name="Sanders M."/>
            <person name="Ma J."/>
            <person name="Kohara Y."/>
            <person name="Sharp S."/>
            <person name="Simmonds M.N."/>
            <person name="Spiegler S."/>
            <person name="Tivey A."/>
            <person name="Sugano S."/>
            <person name="White B."/>
            <person name="Walker D."/>
            <person name="Woodward J.R."/>
            <person name="Winckler T."/>
            <person name="Tanaka Y."/>
            <person name="Shaulsky G."/>
            <person name="Schleicher M."/>
            <person name="Weinstock G.M."/>
            <person name="Rosenthal A."/>
            <person name="Cox E.C."/>
            <person name="Chisholm R.L."/>
            <person name="Gibbs R.A."/>
            <person name="Loomis W.F."/>
            <person name="Platzer M."/>
            <person name="Kay R.R."/>
            <person name="Williams J.G."/>
            <person name="Dear P.H."/>
            <person name="Noegel A.A."/>
            <person name="Barrell B.G."/>
            <person name="Kuspa A."/>
        </authorList>
    </citation>
    <scope>NUCLEOTIDE SEQUENCE [LARGE SCALE GENOMIC DNA]</scope>
    <source>
        <strain>AX4</strain>
    </source>
</reference>